<name>CYSN_AERS4</name>
<proteinExistence type="inferred from homology"/>
<sequence length="471" mass="52222">MNNHIQTAISEQGIEAYLHAQQHKSLLRFLTCGSVDDGKSTLIGRLLHDSQQIYEDQLKALESDSQKLGTTGEKLDLALLVDGLQAEREQGITIDVAYRYFSTAKRKFIISDTPGHEQYTRNMATGASTCDLAIILIDARKGVLDQTRRHSFIASLLGIKQFVVAVNKMDLVEFSQEVFDRISADYREFAKKLNVDTIQIVPVSALDGDNVVNPSDKLAWYQGETLLSLLESADVERELERHPVRLPVQYVNRPNLDFRGFAGTLAAGILRVGDKLAVLPSGKESTVTRIVTFDGDLEYALPGQAITVTFADEIDISRGDLLVDAAKKPQVTQNVLAHIVWMGEESLQPGRVYDVKLATKKTRGQVEVIRHRIEINKLDQLDASELHLNEIGLCEVSLTDPVAFDPYTDIRDTGSFILIDRLTNVTVGAGMIVEGLAAKAVAGQYSEFEIELNALVRKHFPHWQALAIGKE</sequence>
<accession>A4SRG8</accession>
<feature type="chain" id="PRO_1000008900" description="Sulfate adenylyltransferase subunit 1">
    <location>
        <begin position="1"/>
        <end position="471"/>
    </location>
</feature>
<feature type="domain" description="tr-type G">
    <location>
        <begin position="24"/>
        <end position="240"/>
    </location>
</feature>
<feature type="region of interest" description="G1" evidence="1">
    <location>
        <begin position="33"/>
        <end position="40"/>
    </location>
</feature>
<feature type="region of interest" description="G2" evidence="1">
    <location>
        <begin position="91"/>
        <end position="95"/>
    </location>
</feature>
<feature type="region of interest" description="G3" evidence="1">
    <location>
        <begin position="112"/>
        <end position="115"/>
    </location>
</feature>
<feature type="region of interest" description="G4" evidence="1">
    <location>
        <begin position="167"/>
        <end position="170"/>
    </location>
</feature>
<feature type="region of interest" description="G5" evidence="1">
    <location>
        <begin position="204"/>
        <end position="206"/>
    </location>
</feature>
<feature type="binding site" evidence="2">
    <location>
        <begin position="33"/>
        <end position="40"/>
    </location>
    <ligand>
        <name>GTP</name>
        <dbReference type="ChEBI" id="CHEBI:37565"/>
    </ligand>
</feature>
<feature type="binding site" evidence="2">
    <location>
        <begin position="112"/>
        <end position="116"/>
    </location>
    <ligand>
        <name>GTP</name>
        <dbReference type="ChEBI" id="CHEBI:37565"/>
    </ligand>
</feature>
<feature type="binding site" evidence="2">
    <location>
        <begin position="167"/>
        <end position="170"/>
    </location>
    <ligand>
        <name>GTP</name>
        <dbReference type="ChEBI" id="CHEBI:37565"/>
    </ligand>
</feature>
<reference key="1">
    <citation type="journal article" date="2008" name="BMC Genomics">
        <title>The genome of Aeromonas salmonicida subsp. salmonicida A449: insights into the evolution of a fish pathogen.</title>
        <authorList>
            <person name="Reith M.E."/>
            <person name="Singh R.K."/>
            <person name="Curtis B."/>
            <person name="Boyd J.M."/>
            <person name="Bouevitch A."/>
            <person name="Kimball J."/>
            <person name="Munholland J."/>
            <person name="Murphy C."/>
            <person name="Sarty D."/>
            <person name="Williams J."/>
            <person name="Nash J.H."/>
            <person name="Johnson S.C."/>
            <person name="Brown L.L."/>
        </authorList>
    </citation>
    <scope>NUCLEOTIDE SEQUENCE [LARGE SCALE GENOMIC DNA]</scope>
    <source>
        <strain>A449</strain>
    </source>
</reference>
<protein>
    <recommendedName>
        <fullName evidence="2">Sulfate adenylyltransferase subunit 1</fullName>
        <ecNumber evidence="2">2.7.7.4</ecNumber>
    </recommendedName>
    <alternativeName>
        <fullName evidence="2">ATP-sulfurylase large subunit</fullName>
    </alternativeName>
    <alternativeName>
        <fullName evidence="2">Sulfate adenylate transferase</fullName>
        <shortName evidence="2">SAT</shortName>
    </alternativeName>
</protein>
<comment type="function">
    <text evidence="2">With CysD forms the ATP sulfurylase (ATPS) that catalyzes the adenylation of sulfate producing adenosine 5'-phosphosulfate (APS) and diphosphate, the first enzymatic step in sulfur assimilation pathway. APS synthesis involves the formation of a high-energy phosphoric-sulfuric acid anhydride bond driven by GTP hydrolysis by CysN coupled to ATP hydrolysis by CysD.</text>
</comment>
<comment type="catalytic activity">
    <reaction evidence="2">
        <text>sulfate + ATP + H(+) = adenosine 5'-phosphosulfate + diphosphate</text>
        <dbReference type="Rhea" id="RHEA:18133"/>
        <dbReference type="ChEBI" id="CHEBI:15378"/>
        <dbReference type="ChEBI" id="CHEBI:16189"/>
        <dbReference type="ChEBI" id="CHEBI:30616"/>
        <dbReference type="ChEBI" id="CHEBI:33019"/>
        <dbReference type="ChEBI" id="CHEBI:58243"/>
        <dbReference type="EC" id="2.7.7.4"/>
    </reaction>
</comment>
<comment type="pathway">
    <text evidence="2">Sulfur metabolism; hydrogen sulfide biosynthesis; sulfite from sulfate: step 1/3.</text>
</comment>
<comment type="subunit">
    <text evidence="2">Heterodimer composed of CysD, the smaller subunit, and CysN.</text>
</comment>
<comment type="similarity">
    <text evidence="2">Belongs to the TRAFAC class translation factor GTPase superfamily. Classic translation factor GTPase family. CysN/NodQ subfamily.</text>
</comment>
<keyword id="KW-0067">ATP-binding</keyword>
<keyword id="KW-0342">GTP-binding</keyword>
<keyword id="KW-0547">Nucleotide-binding</keyword>
<keyword id="KW-0548">Nucleotidyltransferase</keyword>
<keyword id="KW-0808">Transferase</keyword>
<evidence type="ECO:0000250" key="1"/>
<evidence type="ECO:0000255" key="2">
    <source>
        <dbReference type="HAMAP-Rule" id="MF_00062"/>
    </source>
</evidence>
<organism>
    <name type="scientific">Aeromonas salmonicida (strain A449)</name>
    <dbReference type="NCBI Taxonomy" id="382245"/>
    <lineage>
        <taxon>Bacteria</taxon>
        <taxon>Pseudomonadati</taxon>
        <taxon>Pseudomonadota</taxon>
        <taxon>Gammaproteobacteria</taxon>
        <taxon>Aeromonadales</taxon>
        <taxon>Aeromonadaceae</taxon>
        <taxon>Aeromonas</taxon>
    </lineage>
</organism>
<dbReference type="EC" id="2.7.7.4" evidence="2"/>
<dbReference type="EMBL" id="CP000644">
    <property type="protein sequence ID" value="ABO91490.1"/>
    <property type="molecule type" value="Genomic_DNA"/>
</dbReference>
<dbReference type="RefSeq" id="WP_005318771.1">
    <property type="nucleotide sequence ID" value="NC_009348.1"/>
</dbReference>
<dbReference type="SMR" id="A4SRG8"/>
<dbReference type="STRING" id="29491.GCA_000820065_04517"/>
<dbReference type="KEGG" id="asa:ASA_3522"/>
<dbReference type="eggNOG" id="COG2895">
    <property type="taxonomic scope" value="Bacteria"/>
</dbReference>
<dbReference type="HOGENOM" id="CLU_007265_5_2_6"/>
<dbReference type="UniPathway" id="UPA00140">
    <property type="reaction ID" value="UER00204"/>
</dbReference>
<dbReference type="Proteomes" id="UP000000225">
    <property type="component" value="Chromosome"/>
</dbReference>
<dbReference type="GO" id="GO:0005524">
    <property type="term" value="F:ATP binding"/>
    <property type="evidence" value="ECO:0007669"/>
    <property type="project" value="UniProtKB-KW"/>
</dbReference>
<dbReference type="GO" id="GO:0005525">
    <property type="term" value="F:GTP binding"/>
    <property type="evidence" value="ECO:0007669"/>
    <property type="project" value="UniProtKB-UniRule"/>
</dbReference>
<dbReference type="GO" id="GO:0003924">
    <property type="term" value="F:GTPase activity"/>
    <property type="evidence" value="ECO:0007669"/>
    <property type="project" value="InterPro"/>
</dbReference>
<dbReference type="GO" id="GO:0004781">
    <property type="term" value="F:sulfate adenylyltransferase (ATP) activity"/>
    <property type="evidence" value="ECO:0007669"/>
    <property type="project" value="UniProtKB-UniRule"/>
</dbReference>
<dbReference type="GO" id="GO:0070814">
    <property type="term" value="P:hydrogen sulfide biosynthetic process"/>
    <property type="evidence" value="ECO:0007669"/>
    <property type="project" value="UniProtKB-UniRule"/>
</dbReference>
<dbReference type="GO" id="GO:0000103">
    <property type="term" value="P:sulfate assimilation"/>
    <property type="evidence" value="ECO:0007669"/>
    <property type="project" value="UniProtKB-UniRule"/>
</dbReference>
<dbReference type="CDD" id="cd04166">
    <property type="entry name" value="CysN_ATPS"/>
    <property type="match status" value="1"/>
</dbReference>
<dbReference type="CDD" id="cd03695">
    <property type="entry name" value="CysN_NodQ_II"/>
    <property type="match status" value="1"/>
</dbReference>
<dbReference type="CDD" id="cd04095">
    <property type="entry name" value="CysN_NoDQ_III"/>
    <property type="match status" value="1"/>
</dbReference>
<dbReference type="FunFam" id="2.40.30.10:FF:000027">
    <property type="entry name" value="Sulfate adenylyltransferase subunit 1"/>
    <property type="match status" value="1"/>
</dbReference>
<dbReference type="FunFam" id="2.40.30.10:FF:000031">
    <property type="entry name" value="Sulfate adenylyltransferase subunit 1"/>
    <property type="match status" value="1"/>
</dbReference>
<dbReference type="FunFam" id="3.40.50.300:FF:000119">
    <property type="entry name" value="Sulfate adenylyltransferase subunit 1"/>
    <property type="match status" value="1"/>
</dbReference>
<dbReference type="Gene3D" id="3.40.50.300">
    <property type="entry name" value="P-loop containing nucleotide triphosphate hydrolases"/>
    <property type="match status" value="1"/>
</dbReference>
<dbReference type="Gene3D" id="2.40.30.10">
    <property type="entry name" value="Translation factors"/>
    <property type="match status" value="2"/>
</dbReference>
<dbReference type="HAMAP" id="MF_00062">
    <property type="entry name" value="Sulf_adenylyltr_sub1"/>
    <property type="match status" value="1"/>
</dbReference>
<dbReference type="InterPro" id="IPR041757">
    <property type="entry name" value="CysN_GTP-bd"/>
</dbReference>
<dbReference type="InterPro" id="IPR044138">
    <property type="entry name" value="CysN_II"/>
</dbReference>
<dbReference type="InterPro" id="IPR044139">
    <property type="entry name" value="CysN_NoDQ_III"/>
</dbReference>
<dbReference type="InterPro" id="IPR031157">
    <property type="entry name" value="G_TR_CS"/>
</dbReference>
<dbReference type="InterPro" id="IPR054696">
    <property type="entry name" value="GTP-eEF1A_C"/>
</dbReference>
<dbReference type="InterPro" id="IPR027417">
    <property type="entry name" value="P-loop_NTPase"/>
</dbReference>
<dbReference type="InterPro" id="IPR005225">
    <property type="entry name" value="Small_GTP-bd"/>
</dbReference>
<dbReference type="InterPro" id="IPR011779">
    <property type="entry name" value="SO4_adenylTrfase_lsu"/>
</dbReference>
<dbReference type="InterPro" id="IPR000795">
    <property type="entry name" value="T_Tr_GTP-bd_dom"/>
</dbReference>
<dbReference type="InterPro" id="IPR050100">
    <property type="entry name" value="TRAFAC_GTPase_members"/>
</dbReference>
<dbReference type="InterPro" id="IPR009000">
    <property type="entry name" value="Transl_B-barrel_sf"/>
</dbReference>
<dbReference type="InterPro" id="IPR009001">
    <property type="entry name" value="Transl_elong_EF1A/Init_IF2_C"/>
</dbReference>
<dbReference type="NCBIfam" id="TIGR02034">
    <property type="entry name" value="CysN"/>
    <property type="match status" value="1"/>
</dbReference>
<dbReference type="NCBIfam" id="NF003478">
    <property type="entry name" value="PRK05124.1"/>
    <property type="match status" value="1"/>
</dbReference>
<dbReference type="NCBIfam" id="NF004035">
    <property type="entry name" value="PRK05506.1"/>
    <property type="match status" value="1"/>
</dbReference>
<dbReference type="NCBIfam" id="TIGR00231">
    <property type="entry name" value="small_GTP"/>
    <property type="match status" value="1"/>
</dbReference>
<dbReference type="PANTHER" id="PTHR23115">
    <property type="entry name" value="TRANSLATION FACTOR"/>
    <property type="match status" value="1"/>
</dbReference>
<dbReference type="Pfam" id="PF22594">
    <property type="entry name" value="GTP-eEF1A_C"/>
    <property type="match status" value="1"/>
</dbReference>
<dbReference type="Pfam" id="PF00009">
    <property type="entry name" value="GTP_EFTU"/>
    <property type="match status" value="1"/>
</dbReference>
<dbReference type="PRINTS" id="PR00315">
    <property type="entry name" value="ELONGATNFCT"/>
</dbReference>
<dbReference type="SUPFAM" id="SSF50465">
    <property type="entry name" value="EF-Tu/eEF-1alpha/eIF2-gamma C-terminal domain"/>
    <property type="match status" value="1"/>
</dbReference>
<dbReference type="SUPFAM" id="SSF52540">
    <property type="entry name" value="P-loop containing nucleoside triphosphate hydrolases"/>
    <property type="match status" value="1"/>
</dbReference>
<dbReference type="SUPFAM" id="SSF50447">
    <property type="entry name" value="Translation proteins"/>
    <property type="match status" value="1"/>
</dbReference>
<dbReference type="PROSITE" id="PS00301">
    <property type="entry name" value="G_TR_1"/>
    <property type="match status" value="1"/>
</dbReference>
<dbReference type="PROSITE" id="PS51722">
    <property type="entry name" value="G_TR_2"/>
    <property type="match status" value="1"/>
</dbReference>
<gene>
    <name evidence="2" type="primary">cysN</name>
    <name type="ordered locus">ASA_3522</name>
</gene>